<keyword id="KW-0238">DNA-binding</keyword>
<keyword id="KW-0539">Nucleus</keyword>
<keyword id="KW-1185">Reference proteome</keyword>
<keyword id="KW-0804">Transcription</keyword>
<keyword id="KW-0805">Transcription regulation</keyword>
<organism>
    <name type="scientific">Oryza sativa subsp. japonica</name>
    <name type="common">Rice</name>
    <dbReference type="NCBI Taxonomy" id="39947"/>
    <lineage>
        <taxon>Eukaryota</taxon>
        <taxon>Viridiplantae</taxon>
        <taxon>Streptophyta</taxon>
        <taxon>Embryophyta</taxon>
        <taxon>Tracheophyta</taxon>
        <taxon>Spermatophyta</taxon>
        <taxon>Magnoliopsida</taxon>
        <taxon>Liliopsida</taxon>
        <taxon>Poales</taxon>
        <taxon>Poaceae</taxon>
        <taxon>BOP clade</taxon>
        <taxon>Oryzoideae</taxon>
        <taxon>Oryzeae</taxon>
        <taxon>Oryzinae</taxon>
        <taxon>Oryza</taxon>
        <taxon>Oryza sativa</taxon>
    </lineage>
</organism>
<sequence length="265" mass="28018">MDPAPTLAAELWRTPYLGGGGGGGGGGRGLEAAASGVTEQSNGSRGGGGGGGAGRRRQREAPALEDDSSRIVSTSGGGGGGQDLTDSEAKRFKASKSSGDNSSLRTEAETDSRNASKSGDQNPPPPEPPKQDYIHVRARRGQATDSHSLAERARREKISERMKILQDLVPGCNKVIGKASVLDEIINYIQALQRQVEFLSMKLEAVNAHVNNGIEAFPPKDFGAQVYNTAPGLTFDPQTPREYAQGSTPSEWLHMQIGGTYERVT</sequence>
<name>BH089_ORYSJ</name>
<accession>Q84T08</accession>
<accession>F1DK89</accession>
<protein>
    <recommendedName>
        <fullName evidence="6">Transcription factor BHLH089</fullName>
    </recommendedName>
    <alternativeName>
        <fullName evidence="5">Basic helix-loop-helix protein 89</fullName>
        <shortName evidence="5">OsbHLH089</shortName>
    </alternativeName>
    <alternativeName>
        <fullName evidence="6">bHLH transcription factor bHLH089</fullName>
    </alternativeName>
</protein>
<evidence type="ECO:0000250" key="1">
    <source>
        <dbReference type="UniProtKB" id="Q69WS3"/>
    </source>
</evidence>
<evidence type="ECO:0000255" key="2">
    <source>
        <dbReference type="PROSITE-ProRule" id="PRU00981"/>
    </source>
</evidence>
<evidence type="ECO:0000256" key="3">
    <source>
        <dbReference type="SAM" id="MobiDB-lite"/>
    </source>
</evidence>
<evidence type="ECO:0000269" key="4">
    <source>
    </source>
</evidence>
<evidence type="ECO:0000303" key="5">
    <source>
    </source>
</evidence>
<evidence type="ECO:0000305" key="6"/>
<evidence type="ECO:0000312" key="7">
    <source>
        <dbReference type="EMBL" id="AAO72370.1"/>
    </source>
</evidence>
<evidence type="ECO:0000312" key="8">
    <source>
        <dbReference type="EMBL" id="ABF99407.1"/>
    </source>
</evidence>
<evidence type="ECO:0000312" key="9">
    <source>
        <dbReference type="EMBL" id="BAF13519.1"/>
    </source>
</evidence>
<proteinExistence type="evidence at protein level"/>
<reference key="1">
    <citation type="journal article" date="2009" name="Plant Physiol.">
        <title>GRASSIUS: a platform for comparative regulatory genomics across the grasses.</title>
        <authorList>
            <person name="Yilmaz A."/>
            <person name="Nishiyama M.Y."/>
            <person name="Fuentes B.G."/>
            <person name="Souza G.M."/>
            <person name="Janies D."/>
            <person name="Gray J."/>
            <person name="Grotewold E."/>
        </authorList>
    </citation>
    <scope>NUCLEOTIDE SEQUENCE [MRNA]</scope>
    <source>
        <strain>cv. Nipponbare</strain>
    </source>
</reference>
<reference key="2">
    <citation type="journal article" date="2005" name="Genome Res.">
        <title>Sequence, annotation, and analysis of synteny between rice chromosome 3 and diverged grass species.</title>
        <authorList>
            <consortium name="The rice chromosome 3 sequencing consortium"/>
            <person name="Buell C.R."/>
            <person name="Yuan Q."/>
            <person name="Ouyang S."/>
            <person name="Liu J."/>
            <person name="Zhu W."/>
            <person name="Wang A."/>
            <person name="Maiti R."/>
            <person name="Haas B."/>
            <person name="Wortman J."/>
            <person name="Pertea M."/>
            <person name="Jones K.M."/>
            <person name="Kim M."/>
            <person name="Overton L."/>
            <person name="Tsitrin T."/>
            <person name="Fadrosh D."/>
            <person name="Bera J."/>
            <person name="Weaver B."/>
            <person name="Jin S."/>
            <person name="Johri S."/>
            <person name="Reardon M."/>
            <person name="Webb K."/>
            <person name="Hill J."/>
            <person name="Moffat K."/>
            <person name="Tallon L."/>
            <person name="Van Aken S."/>
            <person name="Lewis M."/>
            <person name="Utterback T."/>
            <person name="Feldblyum T."/>
            <person name="Zismann V."/>
            <person name="Iobst S."/>
            <person name="Hsiao J."/>
            <person name="de Vazeille A.R."/>
            <person name="Salzberg S.L."/>
            <person name="White O."/>
            <person name="Fraser C.M."/>
            <person name="Yu Y."/>
            <person name="Kim H."/>
            <person name="Rambo T."/>
            <person name="Currie J."/>
            <person name="Collura K."/>
            <person name="Kernodle-Thompson S."/>
            <person name="Wei F."/>
            <person name="Kudrna K."/>
            <person name="Ammiraju J.S.S."/>
            <person name="Luo M."/>
            <person name="Goicoechea J.L."/>
            <person name="Wing R.A."/>
            <person name="Henry D."/>
            <person name="Oates R."/>
            <person name="Palmer M."/>
            <person name="Pries G."/>
            <person name="Saski C."/>
            <person name="Simmons J."/>
            <person name="Soderlund C."/>
            <person name="Nelson W."/>
            <person name="de la Bastide M."/>
            <person name="Spiegel L."/>
            <person name="Nascimento L."/>
            <person name="Huang E."/>
            <person name="Preston R."/>
            <person name="Zutavern T."/>
            <person name="Palmer L."/>
            <person name="O'Shaughnessy A."/>
            <person name="Dike S."/>
            <person name="McCombie W.R."/>
            <person name="Minx P."/>
            <person name="Cordum H."/>
            <person name="Wilson R."/>
            <person name="Jin W."/>
            <person name="Lee H.R."/>
            <person name="Jiang J."/>
            <person name="Jackson S."/>
        </authorList>
    </citation>
    <scope>NUCLEOTIDE SEQUENCE [LARGE SCALE GENOMIC DNA]</scope>
    <source>
        <strain>cv. Nipponbare</strain>
    </source>
</reference>
<reference key="3">
    <citation type="journal article" date="2005" name="Nature">
        <title>The map-based sequence of the rice genome.</title>
        <authorList>
            <consortium name="International rice genome sequencing project (IRGSP)"/>
        </authorList>
    </citation>
    <scope>NUCLEOTIDE SEQUENCE [LARGE SCALE GENOMIC DNA]</scope>
    <source>
        <strain>cv. Nipponbare</strain>
    </source>
</reference>
<reference key="4">
    <citation type="journal article" date="2008" name="Nucleic Acids Res.">
        <title>The rice annotation project database (RAP-DB): 2008 update.</title>
        <authorList>
            <consortium name="The rice annotation project (RAP)"/>
        </authorList>
    </citation>
    <scope>GENOME REANNOTATION</scope>
    <source>
        <strain>cv. Nipponbare</strain>
    </source>
</reference>
<reference key="5">
    <citation type="journal article" date="2013" name="Rice">
        <title>Improvement of the Oryza sativa Nipponbare reference genome using next generation sequence and optical map data.</title>
        <authorList>
            <person name="Kawahara Y."/>
            <person name="de la Bastide M."/>
            <person name="Hamilton J.P."/>
            <person name="Kanamori H."/>
            <person name="McCombie W.R."/>
            <person name="Ouyang S."/>
            <person name="Schwartz D.C."/>
            <person name="Tanaka T."/>
            <person name="Wu J."/>
            <person name="Zhou S."/>
            <person name="Childs K.L."/>
            <person name="Davidson R.M."/>
            <person name="Lin H."/>
            <person name="Quesada-Ocampo L."/>
            <person name="Vaillancourt B."/>
            <person name="Sakai H."/>
            <person name="Lee S.S."/>
            <person name="Kim J."/>
            <person name="Numa H."/>
            <person name="Itoh T."/>
            <person name="Buell C.R."/>
            <person name="Matsumoto T."/>
        </authorList>
    </citation>
    <scope>GENOME REANNOTATION</scope>
    <source>
        <strain>cv. Nipponbare</strain>
    </source>
</reference>
<reference key="6">
    <citation type="journal article" date="2006" name="Plant Physiol.">
        <title>Genome-wide analysis of basic/helix-loop-helix transcription factor family in rice and Arabidopsis.</title>
        <authorList>
            <person name="Li X."/>
            <person name="Duan X."/>
            <person name="Jiang H."/>
            <person name="Sun Y."/>
            <person name="Tang Y."/>
            <person name="Yuan Z."/>
            <person name="Guo J."/>
            <person name="Liang W."/>
            <person name="Chen L."/>
            <person name="Yin J."/>
            <person name="Ma H."/>
            <person name="Wang J."/>
            <person name="Zhang D."/>
        </authorList>
    </citation>
    <scope>GENE FAMILY</scope>
    <scope>NOMENCLATURE</scope>
</reference>
<reference key="7">
    <citation type="journal article" date="2013" name="Plant Cell">
        <title>RICE SALT SENSITIVE3 forms a ternary complex with JAZ and class-C bHLH factors and regulates jasmonate-induced gene expression and root cell elongation.</title>
        <authorList>
            <person name="Toda Y."/>
            <person name="Tanaka M."/>
            <person name="Ogawa D."/>
            <person name="Kurata K."/>
            <person name="Kurotani K."/>
            <person name="Habu Y."/>
            <person name="Ando T."/>
            <person name="Sugimoto K."/>
            <person name="Mitsuda N."/>
            <person name="Katoh E."/>
            <person name="Abe K."/>
            <person name="Miyao A."/>
            <person name="Hirochika H."/>
            <person name="Hattori T."/>
            <person name="Takeda S."/>
        </authorList>
    </citation>
    <scope>INTERACTION WITH RSS3</scope>
    <source>
        <strain>cv. Nipponbare</strain>
    </source>
</reference>
<dbReference type="EMBL" id="HQ858847">
    <property type="protein sequence ID" value="ADX60259.1"/>
    <property type="molecule type" value="mRNA"/>
</dbReference>
<dbReference type="EMBL" id="AC108906">
    <property type="protein sequence ID" value="AAO72370.1"/>
    <property type="molecule type" value="Genomic_DNA"/>
</dbReference>
<dbReference type="EMBL" id="DP000009">
    <property type="protein sequence ID" value="ABF99407.1"/>
    <property type="molecule type" value="Genomic_DNA"/>
</dbReference>
<dbReference type="EMBL" id="AP008209">
    <property type="protein sequence ID" value="BAF13519.1"/>
    <property type="molecule type" value="Genomic_DNA"/>
</dbReference>
<dbReference type="EMBL" id="AP014959">
    <property type="protein sequence ID" value="BAS86910.1"/>
    <property type="molecule type" value="Genomic_DNA"/>
</dbReference>
<dbReference type="SMR" id="Q84T08"/>
<dbReference type="FunCoup" id="Q84T08">
    <property type="interactions" value="988"/>
</dbReference>
<dbReference type="STRING" id="39947.Q84T08"/>
<dbReference type="PaxDb" id="39947-Q84T08"/>
<dbReference type="EnsemblPlants" id="Os03t0802900-01">
    <property type="protein sequence ID" value="Os03t0802900-01"/>
    <property type="gene ID" value="Os03g0802900"/>
</dbReference>
<dbReference type="Gramene" id="Os03t0802900-01">
    <property type="protein sequence ID" value="Os03t0802900-01"/>
    <property type="gene ID" value="Os03g0802900"/>
</dbReference>
<dbReference type="KEGG" id="dosa:Os03g0802900"/>
<dbReference type="KEGG" id="osa:4334471"/>
<dbReference type="eggNOG" id="ENOG502QSEM">
    <property type="taxonomic scope" value="Eukaryota"/>
</dbReference>
<dbReference type="HOGENOM" id="CLU_064391_1_1_1"/>
<dbReference type="InParanoid" id="Q84T08"/>
<dbReference type="OMA" id="HMQVDGN"/>
<dbReference type="OrthoDB" id="678327at2759"/>
<dbReference type="Proteomes" id="UP000000763">
    <property type="component" value="Chromosome 3"/>
</dbReference>
<dbReference type="Proteomes" id="UP000059680">
    <property type="component" value="Chromosome 3"/>
</dbReference>
<dbReference type="GO" id="GO:0005634">
    <property type="term" value="C:nucleus"/>
    <property type="evidence" value="ECO:0000318"/>
    <property type="project" value="GO_Central"/>
</dbReference>
<dbReference type="GO" id="GO:0003677">
    <property type="term" value="F:DNA binding"/>
    <property type="evidence" value="ECO:0007669"/>
    <property type="project" value="UniProtKB-KW"/>
</dbReference>
<dbReference type="GO" id="GO:0003700">
    <property type="term" value="F:DNA-binding transcription factor activity"/>
    <property type="evidence" value="ECO:0000318"/>
    <property type="project" value="GO_Central"/>
</dbReference>
<dbReference type="GO" id="GO:0046983">
    <property type="term" value="F:protein dimerization activity"/>
    <property type="evidence" value="ECO:0007669"/>
    <property type="project" value="InterPro"/>
</dbReference>
<dbReference type="GO" id="GO:0006355">
    <property type="term" value="P:regulation of DNA-templated transcription"/>
    <property type="evidence" value="ECO:0000305"/>
    <property type="project" value="Gramene"/>
</dbReference>
<dbReference type="CDD" id="cd18919">
    <property type="entry name" value="bHLH_AtBPE_like"/>
    <property type="match status" value="1"/>
</dbReference>
<dbReference type="FunFam" id="4.10.280.10:FF:000002">
    <property type="entry name" value="Basic helix-loop-helix transcription factor"/>
    <property type="match status" value="1"/>
</dbReference>
<dbReference type="Gene3D" id="4.10.280.10">
    <property type="entry name" value="Helix-loop-helix DNA-binding domain"/>
    <property type="match status" value="1"/>
</dbReference>
<dbReference type="InterPro" id="IPR011598">
    <property type="entry name" value="bHLH_dom"/>
</dbReference>
<dbReference type="InterPro" id="IPR024097">
    <property type="entry name" value="bHLH_ZIP_TF"/>
</dbReference>
<dbReference type="InterPro" id="IPR036638">
    <property type="entry name" value="HLH_DNA-bd_sf"/>
</dbReference>
<dbReference type="PANTHER" id="PTHR12565">
    <property type="entry name" value="STEROL REGULATORY ELEMENT-BINDING PROTEIN"/>
    <property type="match status" value="1"/>
</dbReference>
<dbReference type="PANTHER" id="PTHR12565:SF321">
    <property type="entry name" value="TRANSCRIPTION FACTOR BHLH089"/>
    <property type="match status" value="1"/>
</dbReference>
<dbReference type="Pfam" id="PF00010">
    <property type="entry name" value="HLH"/>
    <property type="match status" value="1"/>
</dbReference>
<dbReference type="SMART" id="SM00353">
    <property type="entry name" value="HLH"/>
    <property type="match status" value="1"/>
</dbReference>
<dbReference type="SUPFAM" id="SSF47459">
    <property type="entry name" value="HLH, helix-loop-helix DNA-binding domain"/>
    <property type="match status" value="1"/>
</dbReference>
<dbReference type="PROSITE" id="PS50888">
    <property type="entry name" value="BHLH"/>
    <property type="match status" value="1"/>
</dbReference>
<feature type="chain" id="PRO_0000440331" description="Transcription factor BHLH089">
    <location>
        <begin position="1"/>
        <end position="265"/>
    </location>
</feature>
<feature type="domain" description="bHLH" evidence="2">
    <location>
        <begin position="142"/>
        <end position="192"/>
    </location>
</feature>
<feature type="region of interest" description="Disordered" evidence="3">
    <location>
        <begin position="1"/>
        <end position="132"/>
    </location>
</feature>
<feature type="region of interest" description="Basic motif; degenerate" evidence="2">
    <location>
        <begin position="142"/>
        <end position="155"/>
    </location>
</feature>
<feature type="region of interest" description="Helix-loop-helix motif" evidence="2">
    <location>
        <begin position="156"/>
        <end position="192"/>
    </location>
</feature>
<feature type="compositionally biased region" description="Gly residues" evidence="3">
    <location>
        <begin position="17"/>
        <end position="29"/>
    </location>
</feature>
<feature type="compositionally biased region" description="Gly residues" evidence="3">
    <location>
        <begin position="44"/>
        <end position="53"/>
    </location>
</feature>
<feature type="compositionally biased region" description="Polar residues" evidence="3">
    <location>
        <begin position="95"/>
        <end position="105"/>
    </location>
</feature>
<feature type="sequence conflict" description="In Ref. 1; ADX60259." evidence="6" ref="1">
    <original>T</original>
    <variation>A</variation>
    <location>
        <position position="74"/>
    </location>
</feature>
<comment type="function">
    <text evidence="1">Transcription factor that may regulate jasmonate-regulated genes.</text>
</comment>
<comment type="subunit">
    <text evidence="4">Interacts with RSS3.</text>
</comment>
<comment type="subcellular location">
    <subcellularLocation>
        <location evidence="2">Nucleus</location>
    </subcellularLocation>
</comment>
<comment type="similarity">
    <text>Belongs to the bHLH protein family.</text>
</comment>
<comment type="caution">
    <text evidence="2">Contains a degenerate basic motif not likely to bind DNA.</text>
</comment>
<gene>
    <name evidence="5" type="primary">BHLH089</name>
    <name evidence="9" type="ordered locus">Os03g0802900</name>
    <name evidence="8" type="ordered locus">LOC_Os03g58830</name>
    <name evidence="7" type="ORF">OSJNBa0087C10.10</name>
</gene>